<sequence length="182" mass="19102">MTELANIPELLASRIRDVADYPEPGVMFKDITPLLADPVAFTALTDTLAAGRRRHPRTKVVGLEARGFILGAPVAVRAGLGFIPVRKAGKLPGATLSQAYDLEYGSAEIEVHAEDLAAGDRVLIVDDVLATGGTAEAAIQLIRRAGAEVCGLAVLMELGFLGGRARLEPILDGAPLEALLQV</sequence>
<feature type="chain" id="PRO_0000149463" description="Adenine phosphoribosyltransferase">
    <location>
        <begin position="1"/>
        <end position="182"/>
    </location>
</feature>
<evidence type="ECO:0000255" key="1">
    <source>
        <dbReference type="HAMAP-Rule" id="MF_00004"/>
    </source>
</evidence>
<protein>
    <recommendedName>
        <fullName evidence="1">Adenine phosphoribosyltransferase</fullName>
        <shortName evidence="1">APRT</shortName>
        <ecNumber evidence="1">2.4.2.7</ecNumber>
    </recommendedName>
</protein>
<organism>
    <name type="scientific">Streptomyces galbus</name>
    <dbReference type="NCBI Taxonomy" id="33898"/>
    <lineage>
        <taxon>Bacteria</taxon>
        <taxon>Bacillati</taxon>
        <taxon>Actinomycetota</taxon>
        <taxon>Actinomycetes</taxon>
        <taxon>Kitasatosporales</taxon>
        <taxon>Streptomycetaceae</taxon>
        <taxon>Streptomyces</taxon>
    </lineage>
</organism>
<accession>Q8KLQ0</accession>
<proteinExistence type="inferred from homology"/>
<gene>
    <name evidence="1" type="primary">apt</name>
</gene>
<reference key="1">
    <citation type="submission" date="2002-08" db="EMBL/GenBank/DDBJ databases">
        <title>Sequence of the genes secD, secF and apt from Streptomyces galbus DSM40480.</title>
        <authorList>
            <person name="Wehmeier U.F."/>
        </authorList>
    </citation>
    <scope>NUCLEOTIDE SEQUENCE [GENOMIC DNA]</scope>
    <source>
        <strain>ATCC 14077 / CBS 700.72 / DSM 40480 / NBRC 13399 / VKM Ac-160</strain>
    </source>
</reference>
<comment type="function">
    <text evidence="1">Catalyzes a salvage reaction resulting in the formation of AMP, that is energically less costly than de novo synthesis.</text>
</comment>
<comment type="catalytic activity">
    <reaction evidence="1">
        <text>AMP + diphosphate = 5-phospho-alpha-D-ribose 1-diphosphate + adenine</text>
        <dbReference type="Rhea" id="RHEA:16609"/>
        <dbReference type="ChEBI" id="CHEBI:16708"/>
        <dbReference type="ChEBI" id="CHEBI:33019"/>
        <dbReference type="ChEBI" id="CHEBI:58017"/>
        <dbReference type="ChEBI" id="CHEBI:456215"/>
        <dbReference type="EC" id="2.4.2.7"/>
    </reaction>
</comment>
<comment type="pathway">
    <text evidence="1">Purine metabolism; AMP biosynthesis via salvage pathway; AMP from adenine: step 1/1.</text>
</comment>
<comment type="subunit">
    <text evidence="1">Homodimer.</text>
</comment>
<comment type="subcellular location">
    <subcellularLocation>
        <location evidence="1">Cytoplasm</location>
    </subcellularLocation>
</comment>
<comment type="similarity">
    <text evidence="1">Belongs to the purine/pyrimidine phosphoribosyltransferase family.</text>
</comment>
<dbReference type="EC" id="2.4.2.7" evidence="1"/>
<dbReference type="EMBL" id="AJ505987">
    <property type="protein sequence ID" value="CAD44527.1"/>
    <property type="molecule type" value="Genomic_DNA"/>
</dbReference>
<dbReference type="SMR" id="Q8KLQ0"/>
<dbReference type="STRING" id="33898.GCA_000772895_08647"/>
<dbReference type="UniPathway" id="UPA00588">
    <property type="reaction ID" value="UER00646"/>
</dbReference>
<dbReference type="GO" id="GO:0005737">
    <property type="term" value="C:cytoplasm"/>
    <property type="evidence" value="ECO:0007669"/>
    <property type="project" value="UniProtKB-SubCell"/>
</dbReference>
<dbReference type="GO" id="GO:0002055">
    <property type="term" value="F:adenine binding"/>
    <property type="evidence" value="ECO:0007669"/>
    <property type="project" value="TreeGrafter"/>
</dbReference>
<dbReference type="GO" id="GO:0003999">
    <property type="term" value="F:adenine phosphoribosyltransferase activity"/>
    <property type="evidence" value="ECO:0007669"/>
    <property type="project" value="UniProtKB-UniRule"/>
</dbReference>
<dbReference type="GO" id="GO:0016208">
    <property type="term" value="F:AMP binding"/>
    <property type="evidence" value="ECO:0007669"/>
    <property type="project" value="TreeGrafter"/>
</dbReference>
<dbReference type="GO" id="GO:0006168">
    <property type="term" value="P:adenine salvage"/>
    <property type="evidence" value="ECO:0007669"/>
    <property type="project" value="InterPro"/>
</dbReference>
<dbReference type="GO" id="GO:0044209">
    <property type="term" value="P:AMP salvage"/>
    <property type="evidence" value="ECO:0007669"/>
    <property type="project" value="UniProtKB-UniRule"/>
</dbReference>
<dbReference type="GO" id="GO:0006166">
    <property type="term" value="P:purine ribonucleoside salvage"/>
    <property type="evidence" value="ECO:0007669"/>
    <property type="project" value="UniProtKB-KW"/>
</dbReference>
<dbReference type="CDD" id="cd06223">
    <property type="entry name" value="PRTases_typeI"/>
    <property type="match status" value="1"/>
</dbReference>
<dbReference type="FunFam" id="3.40.50.2020:FF:000021">
    <property type="entry name" value="Adenine phosphoribosyltransferase"/>
    <property type="match status" value="1"/>
</dbReference>
<dbReference type="Gene3D" id="3.40.50.2020">
    <property type="match status" value="1"/>
</dbReference>
<dbReference type="HAMAP" id="MF_00004">
    <property type="entry name" value="Aden_phosphoribosyltr"/>
    <property type="match status" value="1"/>
</dbReference>
<dbReference type="InterPro" id="IPR005764">
    <property type="entry name" value="Ade_phspho_trans"/>
</dbReference>
<dbReference type="InterPro" id="IPR000836">
    <property type="entry name" value="PRibTrfase_dom"/>
</dbReference>
<dbReference type="InterPro" id="IPR029057">
    <property type="entry name" value="PRTase-like"/>
</dbReference>
<dbReference type="InterPro" id="IPR050054">
    <property type="entry name" value="UPRTase/APRTase"/>
</dbReference>
<dbReference type="NCBIfam" id="TIGR01090">
    <property type="entry name" value="apt"/>
    <property type="match status" value="1"/>
</dbReference>
<dbReference type="NCBIfam" id="NF002634">
    <property type="entry name" value="PRK02304.1-3"/>
    <property type="match status" value="1"/>
</dbReference>
<dbReference type="NCBIfam" id="NF002636">
    <property type="entry name" value="PRK02304.1-5"/>
    <property type="match status" value="1"/>
</dbReference>
<dbReference type="PANTHER" id="PTHR32315">
    <property type="entry name" value="ADENINE PHOSPHORIBOSYLTRANSFERASE"/>
    <property type="match status" value="1"/>
</dbReference>
<dbReference type="PANTHER" id="PTHR32315:SF3">
    <property type="entry name" value="ADENINE PHOSPHORIBOSYLTRANSFERASE"/>
    <property type="match status" value="1"/>
</dbReference>
<dbReference type="Pfam" id="PF00156">
    <property type="entry name" value="Pribosyltran"/>
    <property type="match status" value="1"/>
</dbReference>
<dbReference type="SUPFAM" id="SSF53271">
    <property type="entry name" value="PRTase-like"/>
    <property type="match status" value="1"/>
</dbReference>
<dbReference type="PROSITE" id="PS00103">
    <property type="entry name" value="PUR_PYR_PR_TRANSFER"/>
    <property type="match status" value="1"/>
</dbReference>
<name>APT_STRGB</name>
<keyword id="KW-0963">Cytoplasm</keyword>
<keyword id="KW-0328">Glycosyltransferase</keyword>
<keyword id="KW-0660">Purine salvage</keyword>
<keyword id="KW-0808">Transferase</keyword>